<reference key="1">
    <citation type="journal article" date="2006" name="Appl. Environ. Microbiol.">
        <title>Complete genome sequence of the marine, chemolithoautotrophic, ammonia-oxidizing bacterium Nitrosococcus oceani ATCC 19707.</title>
        <authorList>
            <person name="Klotz M.G."/>
            <person name="Arp D.J."/>
            <person name="Chain P.S.G."/>
            <person name="El-Sheikh A.F."/>
            <person name="Hauser L.J."/>
            <person name="Hommes N.G."/>
            <person name="Larimer F.W."/>
            <person name="Malfatti S.A."/>
            <person name="Norton J.M."/>
            <person name="Poret-Peterson A.T."/>
            <person name="Vergez L.M."/>
            <person name="Ward B.B."/>
        </authorList>
    </citation>
    <scope>NUCLEOTIDE SEQUENCE [LARGE SCALE GENOMIC DNA]</scope>
    <source>
        <strain>ATCC 19707 / BCRC 17464 / JCM 30415 / NCIMB 11848 / C-107</strain>
    </source>
</reference>
<comment type="function">
    <text evidence="1">Peptide chain release factor 1 directs the termination of translation in response to the peptide chain termination codons UAG and UAA.</text>
</comment>
<comment type="subcellular location">
    <subcellularLocation>
        <location evidence="1">Cytoplasm</location>
    </subcellularLocation>
</comment>
<comment type="PTM">
    <text evidence="1">Methylated by PrmC. Methylation increases the termination efficiency of RF1.</text>
</comment>
<comment type="similarity">
    <text evidence="1">Belongs to the prokaryotic/mitochondrial release factor family.</text>
</comment>
<name>RF1_NITOC</name>
<dbReference type="EMBL" id="CP000127">
    <property type="protein sequence ID" value="ABA57032.1"/>
    <property type="molecule type" value="Genomic_DNA"/>
</dbReference>
<dbReference type="RefSeq" id="WP_002813839.1">
    <property type="nucleotide sequence ID" value="NC_007484.1"/>
</dbReference>
<dbReference type="SMR" id="Q3JDR4"/>
<dbReference type="FunCoup" id="Q3JDR4">
    <property type="interactions" value="488"/>
</dbReference>
<dbReference type="STRING" id="323261.Noc_0509"/>
<dbReference type="KEGG" id="noc:Noc_0509"/>
<dbReference type="eggNOG" id="COG0216">
    <property type="taxonomic scope" value="Bacteria"/>
</dbReference>
<dbReference type="HOGENOM" id="CLU_036856_0_1_6"/>
<dbReference type="InParanoid" id="Q3JDR4"/>
<dbReference type="Proteomes" id="UP000006838">
    <property type="component" value="Chromosome"/>
</dbReference>
<dbReference type="GO" id="GO:0005737">
    <property type="term" value="C:cytoplasm"/>
    <property type="evidence" value="ECO:0007669"/>
    <property type="project" value="UniProtKB-SubCell"/>
</dbReference>
<dbReference type="GO" id="GO:0016149">
    <property type="term" value="F:translation release factor activity, codon specific"/>
    <property type="evidence" value="ECO:0007669"/>
    <property type="project" value="UniProtKB-UniRule"/>
</dbReference>
<dbReference type="FunFam" id="3.30.160.20:FF:000004">
    <property type="entry name" value="Peptide chain release factor 1"/>
    <property type="match status" value="1"/>
</dbReference>
<dbReference type="FunFam" id="3.30.70.1660:FF:000002">
    <property type="entry name" value="Peptide chain release factor 1"/>
    <property type="match status" value="1"/>
</dbReference>
<dbReference type="FunFam" id="3.30.70.1660:FF:000004">
    <property type="entry name" value="Peptide chain release factor 1"/>
    <property type="match status" value="1"/>
</dbReference>
<dbReference type="Gene3D" id="3.30.160.20">
    <property type="match status" value="1"/>
</dbReference>
<dbReference type="Gene3D" id="3.30.70.1660">
    <property type="match status" value="2"/>
</dbReference>
<dbReference type="Gene3D" id="6.10.140.1950">
    <property type="match status" value="1"/>
</dbReference>
<dbReference type="HAMAP" id="MF_00093">
    <property type="entry name" value="Rel_fac_1"/>
    <property type="match status" value="1"/>
</dbReference>
<dbReference type="InterPro" id="IPR005139">
    <property type="entry name" value="PCRF"/>
</dbReference>
<dbReference type="InterPro" id="IPR000352">
    <property type="entry name" value="Pep_chain_release_fac_I"/>
</dbReference>
<dbReference type="InterPro" id="IPR045853">
    <property type="entry name" value="Pep_chain_release_fac_I_sf"/>
</dbReference>
<dbReference type="InterPro" id="IPR050057">
    <property type="entry name" value="Prokaryotic/Mito_RF"/>
</dbReference>
<dbReference type="InterPro" id="IPR004373">
    <property type="entry name" value="RF-1"/>
</dbReference>
<dbReference type="NCBIfam" id="TIGR00019">
    <property type="entry name" value="prfA"/>
    <property type="match status" value="1"/>
</dbReference>
<dbReference type="NCBIfam" id="NF001859">
    <property type="entry name" value="PRK00591.1"/>
    <property type="match status" value="1"/>
</dbReference>
<dbReference type="PANTHER" id="PTHR43804">
    <property type="entry name" value="LD18447P"/>
    <property type="match status" value="1"/>
</dbReference>
<dbReference type="PANTHER" id="PTHR43804:SF7">
    <property type="entry name" value="LD18447P"/>
    <property type="match status" value="1"/>
</dbReference>
<dbReference type="Pfam" id="PF03462">
    <property type="entry name" value="PCRF"/>
    <property type="match status" value="1"/>
</dbReference>
<dbReference type="Pfam" id="PF00472">
    <property type="entry name" value="RF-1"/>
    <property type="match status" value="1"/>
</dbReference>
<dbReference type="SMART" id="SM00937">
    <property type="entry name" value="PCRF"/>
    <property type="match status" value="1"/>
</dbReference>
<dbReference type="SUPFAM" id="SSF75620">
    <property type="entry name" value="Release factor"/>
    <property type="match status" value="1"/>
</dbReference>
<dbReference type="PROSITE" id="PS00745">
    <property type="entry name" value="RF_PROK_I"/>
    <property type="match status" value="1"/>
</dbReference>
<sequence>MKDSIRSKLETLAERQQELTALLAEPEIASAQKKFRELSQEYAQLEPVIGCFRDFEQAQSVLNESKALLQDQDPELRVLAQEEIAAAEKKLERLDRELHTLLLPSDPNDKRNIFLEIRAGTGGDEAALFASDLLRMYLRYAEQRGWRTEIMGDSPGEHGGHKEIIVRIVGAGAYSRLKFESGGHRVQRVPQTESQGRIHTSACTVAIMPEAEEIDDIDINPADLRVDTFRASGAGGQHVNKTDSAIRITHLASGIVVECQDERSQHKNRARAMSLLRTKLKSEEEAKLVAEETATRRSLIGSGDRSERIRTYNFPQGRVTDHRINLTLYKLDEILQGNLDAIIDPLVAEHQADQLAALSD</sequence>
<evidence type="ECO:0000255" key="1">
    <source>
        <dbReference type="HAMAP-Rule" id="MF_00093"/>
    </source>
</evidence>
<keyword id="KW-0963">Cytoplasm</keyword>
<keyword id="KW-0488">Methylation</keyword>
<keyword id="KW-0648">Protein biosynthesis</keyword>
<keyword id="KW-1185">Reference proteome</keyword>
<feature type="chain" id="PRO_0000263307" description="Peptide chain release factor 1">
    <location>
        <begin position="1"/>
        <end position="360"/>
    </location>
</feature>
<feature type="modified residue" description="N5-methylglutamine" evidence="1">
    <location>
        <position position="237"/>
    </location>
</feature>
<accession>Q3JDR4</accession>
<organism>
    <name type="scientific">Nitrosococcus oceani (strain ATCC 19707 / BCRC 17464 / JCM 30415 / NCIMB 11848 / C-107)</name>
    <dbReference type="NCBI Taxonomy" id="323261"/>
    <lineage>
        <taxon>Bacteria</taxon>
        <taxon>Pseudomonadati</taxon>
        <taxon>Pseudomonadota</taxon>
        <taxon>Gammaproteobacteria</taxon>
        <taxon>Chromatiales</taxon>
        <taxon>Chromatiaceae</taxon>
        <taxon>Nitrosococcus</taxon>
    </lineage>
</organism>
<proteinExistence type="inferred from homology"/>
<gene>
    <name evidence="1" type="primary">prfA</name>
    <name type="ordered locus">Noc_0509</name>
</gene>
<protein>
    <recommendedName>
        <fullName evidence="1">Peptide chain release factor 1</fullName>
        <shortName evidence="1">RF-1</shortName>
    </recommendedName>
</protein>